<proteinExistence type="inferred from homology"/>
<organism>
    <name type="scientific">Clostridium botulinum (strain Eklund 17B / Type B)</name>
    <dbReference type="NCBI Taxonomy" id="935198"/>
    <lineage>
        <taxon>Bacteria</taxon>
        <taxon>Bacillati</taxon>
        <taxon>Bacillota</taxon>
        <taxon>Clostridia</taxon>
        <taxon>Eubacteriales</taxon>
        <taxon>Clostridiaceae</taxon>
        <taxon>Clostridium</taxon>
    </lineage>
</organism>
<feature type="chain" id="PRO_0000376646" description="2,3,4,5-tetrahydropyridine-2,6-dicarboxylate N-acetyltransferase">
    <location>
        <begin position="1"/>
        <end position="236"/>
    </location>
</feature>
<accession>B2TS78</accession>
<name>DAPH_CLOBB</name>
<keyword id="KW-0012">Acyltransferase</keyword>
<keyword id="KW-0028">Amino-acid biosynthesis</keyword>
<keyword id="KW-0220">Diaminopimelate biosynthesis</keyword>
<keyword id="KW-0457">Lysine biosynthesis</keyword>
<keyword id="KW-0677">Repeat</keyword>
<keyword id="KW-0808">Transferase</keyword>
<dbReference type="EC" id="2.3.1.89" evidence="1"/>
<dbReference type="EMBL" id="CP001056">
    <property type="protein sequence ID" value="ACD21973.1"/>
    <property type="molecule type" value="Genomic_DNA"/>
</dbReference>
<dbReference type="SMR" id="B2TS78"/>
<dbReference type="KEGG" id="cbk:CLL_A2496"/>
<dbReference type="PATRIC" id="fig|935198.13.peg.2455"/>
<dbReference type="HOGENOM" id="CLU_103751_0_0_9"/>
<dbReference type="UniPathway" id="UPA00034">
    <property type="reaction ID" value="UER00022"/>
</dbReference>
<dbReference type="Proteomes" id="UP000001195">
    <property type="component" value="Chromosome"/>
</dbReference>
<dbReference type="GO" id="GO:0047200">
    <property type="term" value="F:tetrahydrodipicolinate N-acetyltransferase activity"/>
    <property type="evidence" value="ECO:0007669"/>
    <property type="project" value="UniProtKB-EC"/>
</dbReference>
<dbReference type="GO" id="GO:0019877">
    <property type="term" value="P:diaminopimelate biosynthetic process"/>
    <property type="evidence" value="ECO:0007669"/>
    <property type="project" value="UniProtKB-UniRule"/>
</dbReference>
<dbReference type="GO" id="GO:0009089">
    <property type="term" value="P:lysine biosynthetic process via diaminopimelate"/>
    <property type="evidence" value="ECO:0007669"/>
    <property type="project" value="UniProtKB-UniRule"/>
</dbReference>
<dbReference type="CDD" id="cd03350">
    <property type="entry name" value="LbH_THP_succinylT"/>
    <property type="match status" value="1"/>
</dbReference>
<dbReference type="Gene3D" id="2.160.10.10">
    <property type="entry name" value="Hexapeptide repeat proteins"/>
    <property type="match status" value="1"/>
</dbReference>
<dbReference type="Gene3D" id="3.30.70.250">
    <property type="entry name" value="Malonyl-CoA ACP transacylase, ACP-binding"/>
    <property type="match status" value="1"/>
</dbReference>
<dbReference type="HAMAP" id="MF_01691">
    <property type="entry name" value="DapH"/>
    <property type="match status" value="1"/>
</dbReference>
<dbReference type="InterPro" id="IPR019873">
    <property type="entry name" value="DapH"/>
</dbReference>
<dbReference type="InterPro" id="IPR013710">
    <property type="entry name" value="DapH_N"/>
</dbReference>
<dbReference type="InterPro" id="IPR001451">
    <property type="entry name" value="Hexapep"/>
</dbReference>
<dbReference type="InterPro" id="IPR018357">
    <property type="entry name" value="Hexapep_transf_CS"/>
</dbReference>
<dbReference type="InterPro" id="IPR050179">
    <property type="entry name" value="Trans_hexapeptide_repeat"/>
</dbReference>
<dbReference type="InterPro" id="IPR011004">
    <property type="entry name" value="Trimer_LpxA-like_sf"/>
</dbReference>
<dbReference type="NCBIfam" id="TIGR03532">
    <property type="entry name" value="DapD_Ac"/>
    <property type="match status" value="1"/>
</dbReference>
<dbReference type="PANTHER" id="PTHR43300:SF10">
    <property type="entry name" value="2,3,4,5-TETRAHYDROPYRIDINE-2,6-DICARBOXYLATE N-ACETYLTRANSFERASE"/>
    <property type="match status" value="1"/>
</dbReference>
<dbReference type="PANTHER" id="PTHR43300">
    <property type="entry name" value="ACETYLTRANSFERASE"/>
    <property type="match status" value="1"/>
</dbReference>
<dbReference type="Pfam" id="PF08503">
    <property type="entry name" value="DapH_N"/>
    <property type="match status" value="1"/>
</dbReference>
<dbReference type="Pfam" id="PF00132">
    <property type="entry name" value="Hexapep"/>
    <property type="match status" value="2"/>
</dbReference>
<dbReference type="SUPFAM" id="SSF51161">
    <property type="entry name" value="Trimeric LpxA-like enzymes"/>
    <property type="match status" value="1"/>
</dbReference>
<dbReference type="PROSITE" id="PS00101">
    <property type="entry name" value="HEXAPEP_TRANSFERASES"/>
    <property type="match status" value="1"/>
</dbReference>
<comment type="function">
    <text evidence="1">Catalyzes the transfer of an acetyl group from acetyl-CoA to tetrahydrodipicolinate.</text>
</comment>
<comment type="catalytic activity">
    <reaction evidence="1">
        <text>(S)-2,3,4,5-tetrahydrodipicolinate + acetyl-CoA + H2O = L-2-acetamido-6-oxoheptanedioate + CoA</text>
        <dbReference type="Rhea" id="RHEA:13085"/>
        <dbReference type="ChEBI" id="CHEBI:15377"/>
        <dbReference type="ChEBI" id="CHEBI:16845"/>
        <dbReference type="ChEBI" id="CHEBI:57287"/>
        <dbReference type="ChEBI" id="CHEBI:57288"/>
        <dbReference type="ChEBI" id="CHEBI:58117"/>
        <dbReference type="EC" id="2.3.1.89"/>
    </reaction>
</comment>
<comment type="pathway">
    <text evidence="1">Amino-acid biosynthesis; L-lysine biosynthesis via DAP pathway; LL-2,6-diaminopimelate from (S)-tetrahydrodipicolinate (acetylase route): step 1/3.</text>
</comment>
<comment type="similarity">
    <text evidence="1">Belongs to the transferase hexapeptide repeat family. DapH subfamily.</text>
</comment>
<gene>
    <name evidence="1" type="primary">dapH</name>
    <name type="ordered locus">CLL_A2496</name>
</gene>
<sequence length="236" mass="25085">MSYNLTDPYEIARFIKESKKSTPVKVYVNGDLSKALMDDIEWYGANGFYILIGESDLIAKIILDNKHLIKHFRLENDRRNSAIPMLDLLEVDARIEPGAIIRDKVTIGKNAVVMMGAVINIGAEIGDGTMVDMNAVIGARGKLGKNVHLGAGAVVAGVLEPPSKEPCTIGDNVLIGANSVILEGVRIGSGSVVAAGSVVAEDVPEGVVVAGSPAKIIKLVDDKTKGKTQLLDDLRK</sequence>
<protein>
    <recommendedName>
        <fullName evidence="1">2,3,4,5-tetrahydropyridine-2,6-dicarboxylate N-acetyltransferase</fullName>
        <ecNumber evidence="1">2.3.1.89</ecNumber>
    </recommendedName>
    <alternativeName>
        <fullName evidence="1">Tetrahydrodipicolinate N-acetyltransferase</fullName>
        <shortName evidence="1">THP acetyltransferase</shortName>
        <shortName evidence="1">Tetrahydropicolinate acetylase</shortName>
    </alternativeName>
</protein>
<reference key="1">
    <citation type="submission" date="2008-04" db="EMBL/GenBank/DDBJ databases">
        <title>Complete sequence of Clostridium botulinum strain Eklund.</title>
        <authorList>
            <person name="Brinkac L.M."/>
            <person name="Brown J.L."/>
            <person name="Bruce D."/>
            <person name="Detter C."/>
            <person name="Munk C."/>
            <person name="Smith L.A."/>
            <person name="Smith T.J."/>
            <person name="Sutton G."/>
            <person name="Brettin T.S."/>
        </authorList>
    </citation>
    <scope>NUCLEOTIDE SEQUENCE [LARGE SCALE GENOMIC DNA]</scope>
    <source>
        <strain>Eklund 17B / Type B</strain>
    </source>
</reference>
<evidence type="ECO:0000255" key="1">
    <source>
        <dbReference type="HAMAP-Rule" id="MF_01691"/>
    </source>
</evidence>